<organism>
    <name type="scientific">Magnetococcus marinus (strain ATCC BAA-1437 / JCM 17883 / MC-1)</name>
    <dbReference type="NCBI Taxonomy" id="156889"/>
    <lineage>
        <taxon>Bacteria</taxon>
        <taxon>Pseudomonadati</taxon>
        <taxon>Pseudomonadota</taxon>
        <taxon>Alphaproteobacteria</taxon>
        <taxon>Magnetococcales</taxon>
        <taxon>Magnetococcaceae</taxon>
        <taxon>Magnetococcus</taxon>
    </lineage>
</organism>
<accession>A0L8J5</accession>
<keyword id="KW-0028">Amino-acid biosynthesis</keyword>
<keyword id="KW-0100">Branched-chain amino acid biosynthesis</keyword>
<keyword id="KW-0432">Leucine biosynthesis</keyword>
<keyword id="KW-0456">Lyase</keyword>
<keyword id="KW-1185">Reference proteome</keyword>
<comment type="function">
    <text evidence="1">Catalyzes the isomerization between 2-isopropylmalate and 3-isopropylmalate, via the formation of 2-isopropylmaleate.</text>
</comment>
<comment type="catalytic activity">
    <reaction evidence="1">
        <text>(2R,3S)-3-isopropylmalate = (2S)-2-isopropylmalate</text>
        <dbReference type="Rhea" id="RHEA:32287"/>
        <dbReference type="ChEBI" id="CHEBI:1178"/>
        <dbReference type="ChEBI" id="CHEBI:35121"/>
        <dbReference type="EC" id="4.2.1.33"/>
    </reaction>
</comment>
<comment type="pathway">
    <text evidence="1">Amino-acid biosynthesis; L-leucine biosynthesis; L-leucine from 3-methyl-2-oxobutanoate: step 2/4.</text>
</comment>
<comment type="subunit">
    <text evidence="1">Heterodimer of LeuC and LeuD.</text>
</comment>
<comment type="similarity">
    <text evidence="1">Belongs to the LeuD family. LeuD type 1 subfamily.</text>
</comment>
<name>LEUD_MAGMM</name>
<evidence type="ECO:0000255" key="1">
    <source>
        <dbReference type="HAMAP-Rule" id="MF_01031"/>
    </source>
</evidence>
<reference key="1">
    <citation type="journal article" date="2009" name="Appl. Environ. Microbiol.">
        <title>Complete genome sequence of the chemolithoautotrophic marine magnetotactic coccus strain MC-1.</title>
        <authorList>
            <person name="Schubbe S."/>
            <person name="Williams T.J."/>
            <person name="Xie G."/>
            <person name="Kiss H.E."/>
            <person name="Brettin T.S."/>
            <person name="Martinez D."/>
            <person name="Ross C.A."/>
            <person name="Schuler D."/>
            <person name="Cox B.L."/>
            <person name="Nealson K.H."/>
            <person name="Bazylinski D.A."/>
        </authorList>
    </citation>
    <scope>NUCLEOTIDE SEQUENCE [LARGE SCALE GENOMIC DNA]</scope>
    <source>
        <strain>ATCC BAA-1437 / JCM 17883 / MC-1</strain>
    </source>
</reference>
<feature type="chain" id="PRO_1000063783" description="3-isopropylmalate dehydratase small subunit">
    <location>
        <begin position="1"/>
        <end position="213"/>
    </location>
</feature>
<sequence length="213" mass="23645">MEAFNTVTAIVAPLDRANVDTDAIIPKQFLKSIKRSGFGPNLFDEWRYLDQGQPGKSNEGRPLNKDFVLNLPRYAGARILLARDNFGCGSSREHAPWALQDFGFRVIIAPSFADIFFNNCFKNGILPIVQEASVVDSLFAEVAAQPGYQLTVDLPAQRITTPSGRSIAFEVDPFRKHCLIHGLDDIGLTLQHVADIQAYESKHKGQAPWAFLD</sequence>
<dbReference type="EC" id="4.2.1.33" evidence="1"/>
<dbReference type="EMBL" id="CP000471">
    <property type="protein sequence ID" value="ABK44288.1"/>
    <property type="molecule type" value="Genomic_DNA"/>
</dbReference>
<dbReference type="RefSeq" id="WP_011713435.1">
    <property type="nucleotide sequence ID" value="NC_008576.1"/>
</dbReference>
<dbReference type="SMR" id="A0L8J5"/>
<dbReference type="STRING" id="156889.Mmc1_1780"/>
<dbReference type="KEGG" id="mgm:Mmc1_1780"/>
<dbReference type="eggNOG" id="COG0066">
    <property type="taxonomic scope" value="Bacteria"/>
</dbReference>
<dbReference type="HOGENOM" id="CLU_081378_0_3_5"/>
<dbReference type="OrthoDB" id="9777465at2"/>
<dbReference type="UniPathway" id="UPA00048">
    <property type="reaction ID" value="UER00071"/>
</dbReference>
<dbReference type="Proteomes" id="UP000002586">
    <property type="component" value="Chromosome"/>
</dbReference>
<dbReference type="GO" id="GO:0009316">
    <property type="term" value="C:3-isopropylmalate dehydratase complex"/>
    <property type="evidence" value="ECO:0007669"/>
    <property type="project" value="InterPro"/>
</dbReference>
<dbReference type="GO" id="GO:0003861">
    <property type="term" value="F:3-isopropylmalate dehydratase activity"/>
    <property type="evidence" value="ECO:0007669"/>
    <property type="project" value="UniProtKB-UniRule"/>
</dbReference>
<dbReference type="GO" id="GO:0009098">
    <property type="term" value="P:L-leucine biosynthetic process"/>
    <property type="evidence" value="ECO:0007669"/>
    <property type="project" value="UniProtKB-UniRule"/>
</dbReference>
<dbReference type="CDD" id="cd01577">
    <property type="entry name" value="IPMI_Swivel"/>
    <property type="match status" value="1"/>
</dbReference>
<dbReference type="FunFam" id="3.20.19.10:FF:000003">
    <property type="entry name" value="3-isopropylmalate dehydratase small subunit"/>
    <property type="match status" value="1"/>
</dbReference>
<dbReference type="Gene3D" id="3.20.19.10">
    <property type="entry name" value="Aconitase, domain 4"/>
    <property type="match status" value="1"/>
</dbReference>
<dbReference type="HAMAP" id="MF_01031">
    <property type="entry name" value="LeuD_type1"/>
    <property type="match status" value="1"/>
</dbReference>
<dbReference type="InterPro" id="IPR004431">
    <property type="entry name" value="3-IsopropMal_deHydase_ssu"/>
</dbReference>
<dbReference type="InterPro" id="IPR015928">
    <property type="entry name" value="Aconitase/3IPM_dehydase_swvl"/>
</dbReference>
<dbReference type="InterPro" id="IPR000573">
    <property type="entry name" value="AconitaseA/IPMdHydase_ssu_swvl"/>
</dbReference>
<dbReference type="InterPro" id="IPR033940">
    <property type="entry name" value="IPMI_Swivel"/>
</dbReference>
<dbReference type="InterPro" id="IPR050075">
    <property type="entry name" value="LeuD"/>
</dbReference>
<dbReference type="NCBIfam" id="TIGR00171">
    <property type="entry name" value="leuD"/>
    <property type="match status" value="1"/>
</dbReference>
<dbReference type="NCBIfam" id="NF002458">
    <property type="entry name" value="PRK01641.1"/>
    <property type="match status" value="1"/>
</dbReference>
<dbReference type="PANTHER" id="PTHR43345:SF5">
    <property type="entry name" value="3-ISOPROPYLMALATE DEHYDRATASE SMALL SUBUNIT"/>
    <property type="match status" value="1"/>
</dbReference>
<dbReference type="PANTHER" id="PTHR43345">
    <property type="entry name" value="3-ISOPROPYLMALATE DEHYDRATASE SMALL SUBUNIT 2-RELATED-RELATED"/>
    <property type="match status" value="1"/>
</dbReference>
<dbReference type="Pfam" id="PF00694">
    <property type="entry name" value="Aconitase_C"/>
    <property type="match status" value="1"/>
</dbReference>
<dbReference type="SUPFAM" id="SSF52016">
    <property type="entry name" value="LeuD/IlvD-like"/>
    <property type="match status" value="1"/>
</dbReference>
<gene>
    <name evidence="1" type="primary">leuD</name>
    <name type="ordered locus">Mmc1_1780</name>
</gene>
<proteinExistence type="inferred from homology"/>
<protein>
    <recommendedName>
        <fullName evidence="1">3-isopropylmalate dehydratase small subunit</fullName>
        <ecNumber evidence="1">4.2.1.33</ecNumber>
    </recommendedName>
    <alternativeName>
        <fullName evidence="1">Alpha-IPM isomerase</fullName>
        <shortName evidence="1">IPMI</shortName>
    </alternativeName>
    <alternativeName>
        <fullName evidence="1">Isopropylmalate isomerase</fullName>
    </alternativeName>
</protein>